<protein>
    <recommendedName>
        <fullName evidence="1">Small ribosomal subunit protein uS8</fullName>
    </recommendedName>
    <alternativeName>
        <fullName evidence="2">30S ribosomal protein S8</fullName>
    </alternativeName>
</protein>
<feature type="chain" id="PRO_1000165341" description="Small ribosomal subunit protein uS8">
    <location>
        <begin position="1"/>
        <end position="132"/>
    </location>
</feature>
<proteinExistence type="inferred from homology"/>
<name>RS8_MYCBT</name>
<keyword id="KW-0687">Ribonucleoprotein</keyword>
<keyword id="KW-0689">Ribosomal protein</keyword>
<keyword id="KW-0694">RNA-binding</keyword>
<keyword id="KW-0699">rRNA-binding</keyword>
<comment type="function">
    <text evidence="1">One of the primary rRNA binding proteins, it binds directly to 16S rRNA central domain where it helps coordinate assembly of the platform of the 30S subunit.</text>
</comment>
<comment type="subunit">
    <text evidence="1">Part of the 30S ribosomal subunit. Contacts proteins S5 and S12.</text>
</comment>
<comment type="similarity">
    <text evidence="1">Belongs to the universal ribosomal protein uS8 family.</text>
</comment>
<organism>
    <name type="scientific">Mycobacterium bovis (strain BCG / Tokyo 172 / ATCC 35737 / TMC 1019)</name>
    <dbReference type="NCBI Taxonomy" id="561275"/>
    <lineage>
        <taxon>Bacteria</taxon>
        <taxon>Bacillati</taxon>
        <taxon>Actinomycetota</taxon>
        <taxon>Actinomycetes</taxon>
        <taxon>Mycobacteriales</taxon>
        <taxon>Mycobacteriaceae</taxon>
        <taxon>Mycobacterium</taxon>
        <taxon>Mycobacterium tuberculosis complex</taxon>
    </lineage>
</organism>
<gene>
    <name evidence="1" type="primary">rpsH</name>
    <name type="ordered locus">JTY_0738</name>
</gene>
<reference key="1">
    <citation type="journal article" date="2009" name="Vaccine">
        <title>Whole genome sequence analysis of Mycobacterium bovis bacillus Calmette-Guerin (BCG) Tokyo 172: a comparative study of BCG vaccine substrains.</title>
        <authorList>
            <person name="Seki M."/>
            <person name="Honda I."/>
            <person name="Fujita I."/>
            <person name="Yano I."/>
            <person name="Yamamoto S."/>
            <person name="Koyama A."/>
        </authorList>
    </citation>
    <scope>NUCLEOTIDE SEQUENCE [LARGE SCALE GENOMIC DNA]</scope>
    <source>
        <strain>BCG / Tokyo 172 / ATCC 35737 / TMC 1019</strain>
    </source>
</reference>
<evidence type="ECO:0000255" key="1">
    <source>
        <dbReference type="HAMAP-Rule" id="MF_01302"/>
    </source>
</evidence>
<evidence type="ECO:0000305" key="2"/>
<dbReference type="EMBL" id="AP010918">
    <property type="protein sequence ID" value="BAH25031.1"/>
    <property type="molecule type" value="Genomic_DNA"/>
</dbReference>
<dbReference type="RefSeq" id="WP_003403669.1">
    <property type="nucleotide sequence ID" value="NZ_CP014566.1"/>
</dbReference>
<dbReference type="SMR" id="C1AL52"/>
<dbReference type="GeneID" id="45424683"/>
<dbReference type="KEGG" id="mbt:JTY_0738"/>
<dbReference type="HOGENOM" id="CLU_098428_0_1_11"/>
<dbReference type="GO" id="GO:1990904">
    <property type="term" value="C:ribonucleoprotein complex"/>
    <property type="evidence" value="ECO:0007669"/>
    <property type="project" value="UniProtKB-KW"/>
</dbReference>
<dbReference type="GO" id="GO:0005840">
    <property type="term" value="C:ribosome"/>
    <property type="evidence" value="ECO:0007669"/>
    <property type="project" value="UniProtKB-KW"/>
</dbReference>
<dbReference type="GO" id="GO:0019843">
    <property type="term" value="F:rRNA binding"/>
    <property type="evidence" value="ECO:0007669"/>
    <property type="project" value="UniProtKB-UniRule"/>
</dbReference>
<dbReference type="GO" id="GO:0003735">
    <property type="term" value="F:structural constituent of ribosome"/>
    <property type="evidence" value="ECO:0007669"/>
    <property type="project" value="InterPro"/>
</dbReference>
<dbReference type="GO" id="GO:0006412">
    <property type="term" value="P:translation"/>
    <property type="evidence" value="ECO:0007669"/>
    <property type="project" value="UniProtKB-UniRule"/>
</dbReference>
<dbReference type="FunFam" id="3.30.1370.30:FF:000002">
    <property type="entry name" value="30S ribosomal protein S8"/>
    <property type="match status" value="1"/>
</dbReference>
<dbReference type="FunFam" id="3.30.1490.10:FF:000001">
    <property type="entry name" value="30S ribosomal protein S8"/>
    <property type="match status" value="1"/>
</dbReference>
<dbReference type="Gene3D" id="3.30.1370.30">
    <property type="match status" value="1"/>
</dbReference>
<dbReference type="Gene3D" id="3.30.1490.10">
    <property type="match status" value="1"/>
</dbReference>
<dbReference type="HAMAP" id="MF_01302_B">
    <property type="entry name" value="Ribosomal_uS8_B"/>
    <property type="match status" value="1"/>
</dbReference>
<dbReference type="InterPro" id="IPR000630">
    <property type="entry name" value="Ribosomal_uS8"/>
</dbReference>
<dbReference type="InterPro" id="IPR047863">
    <property type="entry name" value="Ribosomal_uS8_CS"/>
</dbReference>
<dbReference type="InterPro" id="IPR035987">
    <property type="entry name" value="Ribosomal_uS8_sf"/>
</dbReference>
<dbReference type="NCBIfam" id="NF001109">
    <property type="entry name" value="PRK00136.1"/>
    <property type="match status" value="1"/>
</dbReference>
<dbReference type="PANTHER" id="PTHR11758">
    <property type="entry name" value="40S RIBOSOMAL PROTEIN S15A"/>
    <property type="match status" value="1"/>
</dbReference>
<dbReference type="Pfam" id="PF00410">
    <property type="entry name" value="Ribosomal_S8"/>
    <property type="match status" value="1"/>
</dbReference>
<dbReference type="SUPFAM" id="SSF56047">
    <property type="entry name" value="Ribosomal protein S8"/>
    <property type="match status" value="1"/>
</dbReference>
<dbReference type="PROSITE" id="PS00053">
    <property type="entry name" value="RIBOSOMAL_S8"/>
    <property type="match status" value="1"/>
</dbReference>
<sequence>MTMTDPIADFLTRLRNANSAYHDEVSLPHSKLKANIAQILKNEGYISDFRTEDARVGKSLVIQLKYGPSRERSIAGLRRVSKPGLRVYAKSTNLPRVLGGLGVAIISTSSGLLTDRQAARQGVGGEVLAYVW</sequence>
<accession>C1AL52</accession>